<evidence type="ECO:0000255" key="1">
    <source>
        <dbReference type="HAMAP-Rule" id="MF_01973"/>
    </source>
</evidence>
<evidence type="ECO:0000255" key="2">
    <source>
        <dbReference type="PROSITE-ProRule" id="PRU01122"/>
    </source>
</evidence>
<evidence type="ECO:0000255" key="3">
    <source>
        <dbReference type="PROSITE-ProRule" id="PRU01123"/>
    </source>
</evidence>
<proteinExistence type="inferred from homology"/>
<organism>
    <name type="scientific">Sorangium cellulosum (strain So ce56)</name>
    <name type="common">Polyangium cellulosum (strain So ce56)</name>
    <dbReference type="NCBI Taxonomy" id="448385"/>
    <lineage>
        <taxon>Bacteria</taxon>
        <taxon>Pseudomonadati</taxon>
        <taxon>Myxococcota</taxon>
        <taxon>Polyangia</taxon>
        <taxon>Polyangiales</taxon>
        <taxon>Polyangiaceae</taxon>
        <taxon>Sorangium</taxon>
    </lineage>
</organism>
<feature type="chain" id="PRO_0000396599" description="Lon protease 1">
    <location>
        <begin position="1"/>
        <end position="811"/>
    </location>
</feature>
<feature type="domain" description="Lon N-terminal" evidence="3">
    <location>
        <begin position="15"/>
        <end position="212"/>
    </location>
</feature>
<feature type="domain" description="Lon proteolytic" evidence="2">
    <location>
        <begin position="613"/>
        <end position="794"/>
    </location>
</feature>
<feature type="active site" evidence="1">
    <location>
        <position position="700"/>
    </location>
</feature>
<feature type="active site" evidence="1">
    <location>
        <position position="743"/>
    </location>
</feature>
<feature type="binding site" evidence="1">
    <location>
        <begin position="376"/>
        <end position="383"/>
    </location>
    <ligand>
        <name>ATP</name>
        <dbReference type="ChEBI" id="CHEBI:30616"/>
    </ligand>
</feature>
<name>LON1_SORC5</name>
<gene>
    <name evidence="1" type="primary">lon1</name>
    <name type="ordered locus">sce0897</name>
</gene>
<keyword id="KW-0067">ATP-binding</keyword>
<keyword id="KW-0963">Cytoplasm</keyword>
<keyword id="KW-0378">Hydrolase</keyword>
<keyword id="KW-0547">Nucleotide-binding</keyword>
<keyword id="KW-0645">Protease</keyword>
<keyword id="KW-1185">Reference proteome</keyword>
<keyword id="KW-0720">Serine protease</keyword>
<keyword id="KW-0346">Stress response</keyword>
<comment type="function">
    <text evidence="1">ATP-dependent serine protease that mediates the selective degradation of mutant and abnormal proteins as well as certain short-lived regulatory proteins. Required for cellular homeostasis and for survival from DNA damage and developmental changes induced by stress. Degrades polypeptides processively to yield small peptide fragments that are 5 to 10 amino acids long. Binds to DNA in a double-stranded, site-specific manner.</text>
</comment>
<comment type="catalytic activity">
    <reaction evidence="1">
        <text>Hydrolysis of proteins in presence of ATP.</text>
        <dbReference type="EC" id="3.4.21.53"/>
    </reaction>
</comment>
<comment type="subunit">
    <text evidence="1">Homohexamer. Organized in a ring with a central cavity.</text>
</comment>
<comment type="subcellular location">
    <subcellularLocation>
        <location evidence="1">Cytoplasm</location>
    </subcellularLocation>
</comment>
<comment type="induction">
    <text evidence="1">By heat shock.</text>
</comment>
<comment type="similarity">
    <text evidence="1">Belongs to the peptidase S16 family.</text>
</comment>
<reference key="1">
    <citation type="journal article" date="2007" name="Nat. Biotechnol.">
        <title>Complete genome sequence of the myxobacterium Sorangium cellulosum.</title>
        <authorList>
            <person name="Schneiker S."/>
            <person name="Perlova O."/>
            <person name="Kaiser O."/>
            <person name="Gerth K."/>
            <person name="Alici A."/>
            <person name="Altmeyer M.O."/>
            <person name="Bartels D."/>
            <person name="Bekel T."/>
            <person name="Beyer S."/>
            <person name="Bode E."/>
            <person name="Bode H.B."/>
            <person name="Bolten C.J."/>
            <person name="Choudhuri J.V."/>
            <person name="Doss S."/>
            <person name="Elnakady Y.A."/>
            <person name="Frank B."/>
            <person name="Gaigalat L."/>
            <person name="Goesmann A."/>
            <person name="Groeger C."/>
            <person name="Gross F."/>
            <person name="Jelsbak L."/>
            <person name="Jelsbak L."/>
            <person name="Kalinowski J."/>
            <person name="Kegler C."/>
            <person name="Knauber T."/>
            <person name="Konietzny S."/>
            <person name="Kopp M."/>
            <person name="Krause L."/>
            <person name="Krug D."/>
            <person name="Linke B."/>
            <person name="Mahmud T."/>
            <person name="Martinez-Arias R."/>
            <person name="McHardy A.C."/>
            <person name="Merai M."/>
            <person name="Meyer F."/>
            <person name="Mormann S."/>
            <person name="Munoz-Dorado J."/>
            <person name="Perez J."/>
            <person name="Pradella S."/>
            <person name="Rachid S."/>
            <person name="Raddatz G."/>
            <person name="Rosenau F."/>
            <person name="Rueckert C."/>
            <person name="Sasse F."/>
            <person name="Scharfe M."/>
            <person name="Schuster S.C."/>
            <person name="Suen G."/>
            <person name="Treuner-Lange A."/>
            <person name="Velicer G.J."/>
            <person name="Vorholter F.-J."/>
            <person name="Weissman K.J."/>
            <person name="Welch R.D."/>
            <person name="Wenzel S.C."/>
            <person name="Whitworth D.E."/>
            <person name="Wilhelm S."/>
            <person name="Wittmann C."/>
            <person name="Bloecker H."/>
            <person name="Puehler A."/>
            <person name="Mueller R."/>
        </authorList>
    </citation>
    <scope>NUCLEOTIDE SEQUENCE [LARGE SCALE GENOMIC DNA]</scope>
    <source>
        <strain>So ce56</strain>
    </source>
</reference>
<sequence>MRFAQRPAMPERRSLPVLSLRDTVLFPGIATPITVGRLKTLRAVEAALRVEGEDKRIFAVAQRDAAEEPTASGLFSIGVIARITQVQRFGSGLQLVLYCERRAAAPRYTEVDGVIRAPVIELADLPLRPEEDGALEALSREVRERAVEYGRHRGAPEDVLKQFVGSMYGPAELVNHIAFYLDLPTPEKQALLEILSTEERMRSLALHLYRQIGIVETQEKIRTTVEEELGERQREIYLREQLRAIQKELGEEDDENAAARLEHKLQRANLPAEILQEARRDLARLRRMGRETSPEAQVLMTWLEWVADLPWSQRTDDHVDLDRARAILDEDHYGLGDVKDRVLEFLAVRKLRLEQARSEGERSRAISRGPILLFLGPPGTGKTSIAESIARALGRKYVRVSLGGARDEADIRGHRRTYVGAMPGRILQGIKRIGSKNPVIVLDEVDKLGASYQGDPGAALLEVLDPAQNDGFVDHYLGLPFDLSEVLFICTANFRETIPPPLFDRMEPALFAGYTEQEKHEIARKYLLPRQRKECGLREEQLRVTGTAIGGIISGYTREAGVRQLERTLGALARKAARRIAAGEIERAVVGADDDVKELLGRARMRLERRLQYDQPGVATGMYYTQMGGDIMHVEASVMPGKGDFVLTGQLGDVMKESGRAALSYARAHAAELGVPSDRLQRRDVHIHVPAGAVPKDGPSAGVTMAVALVSALSGRPVRSDIAMTGEITLRGTVLPIGGIKEKVLGAHRAGIFEILLPADNEADLDDLPAEVRSSLEFYLVNTLDEALARCLRLRSIRLEAPEEMPHARAS</sequence>
<dbReference type="EC" id="3.4.21.53" evidence="1"/>
<dbReference type="EMBL" id="AM746676">
    <property type="protein sequence ID" value="CAN91054.1"/>
    <property type="molecule type" value="Genomic_DNA"/>
</dbReference>
<dbReference type="SMR" id="A9ETZ9"/>
<dbReference type="STRING" id="448385.sce0897"/>
<dbReference type="MEROPS" id="S16.001"/>
<dbReference type="KEGG" id="scl:sce0897"/>
<dbReference type="eggNOG" id="COG0466">
    <property type="taxonomic scope" value="Bacteria"/>
</dbReference>
<dbReference type="HOGENOM" id="CLU_004109_4_3_7"/>
<dbReference type="OrthoDB" id="9803599at2"/>
<dbReference type="BioCyc" id="SCEL448385:SCE_RS04700-MONOMER"/>
<dbReference type="Proteomes" id="UP000002139">
    <property type="component" value="Chromosome"/>
</dbReference>
<dbReference type="GO" id="GO:0005737">
    <property type="term" value="C:cytoplasm"/>
    <property type="evidence" value="ECO:0007669"/>
    <property type="project" value="UniProtKB-SubCell"/>
</dbReference>
<dbReference type="GO" id="GO:0005524">
    <property type="term" value="F:ATP binding"/>
    <property type="evidence" value="ECO:0007669"/>
    <property type="project" value="UniProtKB-UniRule"/>
</dbReference>
<dbReference type="GO" id="GO:0016887">
    <property type="term" value="F:ATP hydrolysis activity"/>
    <property type="evidence" value="ECO:0007669"/>
    <property type="project" value="UniProtKB-UniRule"/>
</dbReference>
<dbReference type="GO" id="GO:0004176">
    <property type="term" value="F:ATP-dependent peptidase activity"/>
    <property type="evidence" value="ECO:0007669"/>
    <property type="project" value="UniProtKB-UniRule"/>
</dbReference>
<dbReference type="GO" id="GO:0043565">
    <property type="term" value="F:sequence-specific DNA binding"/>
    <property type="evidence" value="ECO:0007669"/>
    <property type="project" value="UniProtKB-UniRule"/>
</dbReference>
<dbReference type="GO" id="GO:0004252">
    <property type="term" value="F:serine-type endopeptidase activity"/>
    <property type="evidence" value="ECO:0007669"/>
    <property type="project" value="UniProtKB-UniRule"/>
</dbReference>
<dbReference type="GO" id="GO:0034605">
    <property type="term" value="P:cellular response to heat"/>
    <property type="evidence" value="ECO:0007669"/>
    <property type="project" value="UniProtKB-UniRule"/>
</dbReference>
<dbReference type="GO" id="GO:0006515">
    <property type="term" value="P:protein quality control for misfolded or incompletely synthesized proteins"/>
    <property type="evidence" value="ECO:0007669"/>
    <property type="project" value="UniProtKB-UniRule"/>
</dbReference>
<dbReference type="CDD" id="cd19500">
    <property type="entry name" value="RecA-like_Lon"/>
    <property type="match status" value="1"/>
</dbReference>
<dbReference type="FunFam" id="3.40.50.300:FF:000021">
    <property type="entry name" value="Lon protease homolog"/>
    <property type="match status" value="1"/>
</dbReference>
<dbReference type="Gene3D" id="1.10.8.60">
    <property type="match status" value="1"/>
</dbReference>
<dbReference type="Gene3D" id="1.20.5.5270">
    <property type="match status" value="1"/>
</dbReference>
<dbReference type="Gene3D" id="1.20.58.1480">
    <property type="match status" value="1"/>
</dbReference>
<dbReference type="Gene3D" id="3.30.230.10">
    <property type="match status" value="1"/>
</dbReference>
<dbReference type="Gene3D" id="2.30.130.40">
    <property type="entry name" value="LON domain-like"/>
    <property type="match status" value="1"/>
</dbReference>
<dbReference type="Gene3D" id="3.40.50.300">
    <property type="entry name" value="P-loop containing nucleotide triphosphate hydrolases"/>
    <property type="match status" value="1"/>
</dbReference>
<dbReference type="HAMAP" id="MF_01973">
    <property type="entry name" value="lon_bact"/>
    <property type="match status" value="1"/>
</dbReference>
<dbReference type="InterPro" id="IPR003593">
    <property type="entry name" value="AAA+_ATPase"/>
</dbReference>
<dbReference type="InterPro" id="IPR003959">
    <property type="entry name" value="ATPase_AAA_core"/>
</dbReference>
<dbReference type="InterPro" id="IPR027543">
    <property type="entry name" value="Lon_bac"/>
</dbReference>
<dbReference type="InterPro" id="IPR004815">
    <property type="entry name" value="Lon_bac/euk-typ"/>
</dbReference>
<dbReference type="InterPro" id="IPR054594">
    <property type="entry name" value="Lon_lid"/>
</dbReference>
<dbReference type="InterPro" id="IPR008269">
    <property type="entry name" value="Lon_proteolytic"/>
</dbReference>
<dbReference type="InterPro" id="IPR027065">
    <property type="entry name" value="Lon_Prtase"/>
</dbReference>
<dbReference type="InterPro" id="IPR003111">
    <property type="entry name" value="Lon_prtase_N"/>
</dbReference>
<dbReference type="InterPro" id="IPR046336">
    <property type="entry name" value="Lon_prtase_N_sf"/>
</dbReference>
<dbReference type="InterPro" id="IPR027417">
    <property type="entry name" value="P-loop_NTPase"/>
</dbReference>
<dbReference type="InterPro" id="IPR008268">
    <property type="entry name" value="Peptidase_S16_AS"/>
</dbReference>
<dbReference type="InterPro" id="IPR015947">
    <property type="entry name" value="PUA-like_sf"/>
</dbReference>
<dbReference type="InterPro" id="IPR020568">
    <property type="entry name" value="Ribosomal_Su5_D2-typ_SF"/>
</dbReference>
<dbReference type="InterPro" id="IPR014721">
    <property type="entry name" value="Ribsml_uS5_D2-typ_fold_subgr"/>
</dbReference>
<dbReference type="NCBIfam" id="TIGR00763">
    <property type="entry name" value="lon"/>
    <property type="match status" value="1"/>
</dbReference>
<dbReference type="PANTHER" id="PTHR10046">
    <property type="entry name" value="ATP DEPENDENT LON PROTEASE FAMILY MEMBER"/>
    <property type="match status" value="1"/>
</dbReference>
<dbReference type="Pfam" id="PF00004">
    <property type="entry name" value="AAA"/>
    <property type="match status" value="1"/>
</dbReference>
<dbReference type="Pfam" id="PF05362">
    <property type="entry name" value="Lon_C"/>
    <property type="match status" value="1"/>
</dbReference>
<dbReference type="Pfam" id="PF22667">
    <property type="entry name" value="Lon_lid"/>
    <property type="match status" value="1"/>
</dbReference>
<dbReference type="Pfam" id="PF02190">
    <property type="entry name" value="LON_substr_bdg"/>
    <property type="match status" value="1"/>
</dbReference>
<dbReference type="PIRSF" id="PIRSF001174">
    <property type="entry name" value="Lon_proteas"/>
    <property type="match status" value="1"/>
</dbReference>
<dbReference type="PRINTS" id="PR00830">
    <property type="entry name" value="ENDOLAPTASE"/>
</dbReference>
<dbReference type="SMART" id="SM00382">
    <property type="entry name" value="AAA"/>
    <property type="match status" value="1"/>
</dbReference>
<dbReference type="SMART" id="SM00464">
    <property type="entry name" value="LON"/>
    <property type="match status" value="1"/>
</dbReference>
<dbReference type="SUPFAM" id="SSF52540">
    <property type="entry name" value="P-loop containing nucleoside triphosphate hydrolases"/>
    <property type="match status" value="1"/>
</dbReference>
<dbReference type="SUPFAM" id="SSF88697">
    <property type="entry name" value="PUA domain-like"/>
    <property type="match status" value="1"/>
</dbReference>
<dbReference type="SUPFAM" id="SSF54211">
    <property type="entry name" value="Ribosomal protein S5 domain 2-like"/>
    <property type="match status" value="1"/>
</dbReference>
<dbReference type="PROSITE" id="PS51787">
    <property type="entry name" value="LON_N"/>
    <property type="match status" value="1"/>
</dbReference>
<dbReference type="PROSITE" id="PS51786">
    <property type="entry name" value="LON_PROTEOLYTIC"/>
    <property type="match status" value="1"/>
</dbReference>
<dbReference type="PROSITE" id="PS01046">
    <property type="entry name" value="LON_SER"/>
    <property type="match status" value="1"/>
</dbReference>
<protein>
    <recommendedName>
        <fullName evidence="1">Lon protease 1</fullName>
        <ecNumber evidence="1">3.4.21.53</ecNumber>
    </recommendedName>
    <alternativeName>
        <fullName evidence="1">ATP-dependent protease La 1</fullName>
    </alternativeName>
</protein>
<accession>A9ETZ9</accession>